<keyword id="KW-0998">Cell outer membrane</keyword>
<keyword id="KW-0449">Lipoprotein</keyword>
<keyword id="KW-0472">Membrane</keyword>
<keyword id="KW-0564">Palmitate</keyword>
<keyword id="KW-1185">Reference proteome</keyword>
<keyword id="KW-0732">Signal</keyword>
<dbReference type="EMBL" id="AE014075">
    <property type="protein sequence ID" value="AAN80293.1"/>
    <property type="molecule type" value="Genomic_DNA"/>
</dbReference>
<dbReference type="RefSeq" id="WP_000698145.1">
    <property type="nucleotide sequence ID" value="NZ_CP051263.1"/>
</dbReference>
<dbReference type="STRING" id="199310.c1829"/>
<dbReference type="KEGG" id="ecc:c1829"/>
<dbReference type="eggNOG" id="ENOG5032Y6T">
    <property type="taxonomic scope" value="Bacteria"/>
</dbReference>
<dbReference type="HOGENOM" id="CLU_183514_0_0_6"/>
<dbReference type="BioCyc" id="ECOL199310:C1829-MONOMER"/>
<dbReference type="Proteomes" id="UP000001410">
    <property type="component" value="Chromosome"/>
</dbReference>
<dbReference type="InterPro" id="IPR025985">
    <property type="entry name" value="YnbE-like"/>
</dbReference>
<dbReference type="Pfam" id="PF13617">
    <property type="entry name" value="Lipoprotein_19"/>
    <property type="match status" value="1"/>
</dbReference>
<dbReference type="PROSITE" id="PS51257">
    <property type="entry name" value="PROKAR_LIPOPROTEIN"/>
    <property type="match status" value="1"/>
</dbReference>
<name>YNBE_ECOL6</name>
<sequence length="61" mass="6840">MKILLAALTSSFMLVGCTPRIEVAAPKEPITINMNVKIEHEIIIKADKDVEELLETRSDLF</sequence>
<accession>P64449</accession>
<accession>P76075</accession>
<proteinExistence type="inferred from homology"/>
<reference key="1">
    <citation type="journal article" date="2002" name="Proc. Natl. Acad. Sci. U.S.A.">
        <title>Extensive mosaic structure revealed by the complete genome sequence of uropathogenic Escherichia coli.</title>
        <authorList>
            <person name="Welch R.A."/>
            <person name="Burland V."/>
            <person name="Plunkett G. III"/>
            <person name="Redford P."/>
            <person name="Roesch P."/>
            <person name="Rasko D."/>
            <person name="Buckles E.L."/>
            <person name="Liou S.-R."/>
            <person name="Boutin A."/>
            <person name="Hackett J."/>
            <person name="Stroud D."/>
            <person name="Mayhew G.F."/>
            <person name="Rose D.J."/>
            <person name="Zhou S."/>
            <person name="Schwartz D.C."/>
            <person name="Perna N.T."/>
            <person name="Mobley H.L.T."/>
            <person name="Donnenberg M.S."/>
            <person name="Blattner F.R."/>
        </authorList>
    </citation>
    <scope>NUCLEOTIDE SEQUENCE [LARGE SCALE GENOMIC DNA]</scope>
    <source>
        <strain>CFT073 / ATCC 700928 / UPEC</strain>
    </source>
</reference>
<feature type="signal peptide" evidence="2">
    <location>
        <begin position="1"/>
        <end position="16"/>
    </location>
</feature>
<feature type="chain" id="PRO_0000168925" description="Outer membrane lipoprotein YnbE" evidence="2">
    <location>
        <begin position="17"/>
        <end position="61"/>
    </location>
</feature>
<feature type="lipid moiety-binding region" description="N-palmitoyl cysteine" evidence="2">
    <location>
        <position position="17"/>
    </location>
</feature>
<feature type="lipid moiety-binding region" description="S-diacylglycerol cysteine" evidence="2">
    <location>
        <position position="17"/>
    </location>
</feature>
<gene>
    <name type="primary">ynbE</name>
    <name type="ordered locus">c1829</name>
</gene>
<organism>
    <name type="scientific">Escherichia coli O6:H1 (strain CFT073 / ATCC 700928 / UPEC)</name>
    <dbReference type="NCBI Taxonomy" id="199310"/>
    <lineage>
        <taxon>Bacteria</taxon>
        <taxon>Pseudomonadati</taxon>
        <taxon>Pseudomonadota</taxon>
        <taxon>Gammaproteobacteria</taxon>
        <taxon>Enterobacterales</taxon>
        <taxon>Enterobacteriaceae</taxon>
        <taxon>Escherichia</taxon>
    </lineage>
</organism>
<comment type="function">
    <text evidence="1">Involved in outer membrane lipid homeostasis. Interacts with the inner membrane protein YdbH to form a functional protein bridge connecting the inner and outer membranes of the cell. Is required for YdbH's function and may facilitate phospholipid transport through the periplasm.</text>
</comment>
<comment type="subunit">
    <text evidence="1">Interacts with the C-terminal region of the probable phospholipid transport protein YdbH.</text>
</comment>
<comment type="subcellular location">
    <subcellularLocation>
        <location evidence="1">Cell outer membrane</location>
        <topology evidence="2">Lipid-anchor</topology>
    </subcellularLocation>
</comment>
<comment type="similarity">
    <text evidence="3">Belongs to the lipoprotein YnbE family.</text>
</comment>
<evidence type="ECO:0000250" key="1">
    <source>
        <dbReference type="UniProtKB" id="P64448"/>
    </source>
</evidence>
<evidence type="ECO:0000255" key="2">
    <source>
        <dbReference type="PROSITE-ProRule" id="PRU00303"/>
    </source>
</evidence>
<evidence type="ECO:0000305" key="3"/>
<protein>
    <recommendedName>
        <fullName evidence="1">Outer membrane lipoprotein YnbE</fullName>
    </recommendedName>
    <alternativeName>
        <fullName evidence="1">Probable phospholipid transport lipoprotein YnbE</fullName>
    </alternativeName>
</protein>